<protein>
    <recommendedName>
        <fullName evidence="1">Large ribosomal subunit protein uL11</fullName>
    </recommendedName>
    <alternativeName>
        <fullName evidence="2">50S ribosomal protein L11</fullName>
    </alternativeName>
</protein>
<dbReference type="EMBL" id="CP000764">
    <property type="protein sequence ID" value="ABS20466.1"/>
    <property type="molecule type" value="Genomic_DNA"/>
</dbReference>
<dbReference type="RefSeq" id="WP_001085872.1">
    <property type="nucleotide sequence ID" value="NC_009674.1"/>
</dbReference>
<dbReference type="SMR" id="A7GK08"/>
<dbReference type="STRING" id="315749.Bcer98_0091"/>
<dbReference type="GeneID" id="93010956"/>
<dbReference type="KEGG" id="bcy:Bcer98_0091"/>
<dbReference type="eggNOG" id="COG0080">
    <property type="taxonomic scope" value="Bacteria"/>
</dbReference>
<dbReference type="HOGENOM" id="CLU_074237_2_1_9"/>
<dbReference type="OrthoDB" id="9802408at2"/>
<dbReference type="Proteomes" id="UP000002300">
    <property type="component" value="Chromosome"/>
</dbReference>
<dbReference type="GO" id="GO:0022625">
    <property type="term" value="C:cytosolic large ribosomal subunit"/>
    <property type="evidence" value="ECO:0007669"/>
    <property type="project" value="TreeGrafter"/>
</dbReference>
<dbReference type="GO" id="GO:0070180">
    <property type="term" value="F:large ribosomal subunit rRNA binding"/>
    <property type="evidence" value="ECO:0007669"/>
    <property type="project" value="UniProtKB-UniRule"/>
</dbReference>
<dbReference type="GO" id="GO:0003735">
    <property type="term" value="F:structural constituent of ribosome"/>
    <property type="evidence" value="ECO:0007669"/>
    <property type="project" value="InterPro"/>
</dbReference>
<dbReference type="GO" id="GO:0006412">
    <property type="term" value="P:translation"/>
    <property type="evidence" value="ECO:0007669"/>
    <property type="project" value="UniProtKB-UniRule"/>
</dbReference>
<dbReference type="CDD" id="cd00349">
    <property type="entry name" value="Ribosomal_L11"/>
    <property type="match status" value="1"/>
</dbReference>
<dbReference type="FunFam" id="1.10.10.250:FF:000001">
    <property type="entry name" value="50S ribosomal protein L11"/>
    <property type="match status" value="1"/>
</dbReference>
<dbReference type="FunFam" id="3.30.1550.10:FF:000001">
    <property type="entry name" value="50S ribosomal protein L11"/>
    <property type="match status" value="1"/>
</dbReference>
<dbReference type="Gene3D" id="1.10.10.250">
    <property type="entry name" value="Ribosomal protein L11, C-terminal domain"/>
    <property type="match status" value="1"/>
</dbReference>
<dbReference type="Gene3D" id="3.30.1550.10">
    <property type="entry name" value="Ribosomal protein L11/L12, N-terminal domain"/>
    <property type="match status" value="1"/>
</dbReference>
<dbReference type="HAMAP" id="MF_00736">
    <property type="entry name" value="Ribosomal_uL11"/>
    <property type="match status" value="1"/>
</dbReference>
<dbReference type="InterPro" id="IPR000911">
    <property type="entry name" value="Ribosomal_uL11"/>
</dbReference>
<dbReference type="InterPro" id="IPR006519">
    <property type="entry name" value="Ribosomal_uL11_bac-typ"/>
</dbReference>
<dbReference type="InterPro" id="IPR020783">
    <property type="entry name" value="Ribosomal_uL11_C"/>
</dbReference>
<dbReference type="InterPro" id="IPR036769">
    <property type="entry name" value="Ribosomal_uL11_C_sf"/>
</dbReference>
<dbReference type="InterPro" id="IPR020785">
    <property type="entry name" value="Ribosomal_uL11_CS"/>
</dbReference>
<dbReference type="InterPro" id="IPR020784">
    <property type="entry name" value="Ribosomal_uL11_N"/>
</dbReference>
<dbReference type="InterPro" id="IPR036796">
    <property type="entry name" value="Ribosomal_uL11_N_sf"/>
</dbReference>
<dbReference type="NCBIfam" id="TIGR01632">
    <property type="entry name" value="L11_bact"/>
    <property type="match status" value="1"/>
</dbReference>
<dbReference type="PANTHER" id="PTHR11661">
    <property type="entry name" value="60S RIBOSOMAL PROTEIN L12"/>
    <property type="match status" value="1"/>
</dbReference>
<dbReference type="PANTHER" id="PTHR11661:SF1">
    <property type="entry name" value="LARGE RIBOSOMAL SUBUNIT PROTEIN UL11M"/>
    <property type="match status" value="1"/>
</dbReference>
<dbReference type="Pfam" id="PF00298">
    <property type="entry name" value="Ribosomal_L11"/>
    <property type="match status" value="1"/>
</dbReference>
<dbReference type="Pfam" id="PF03946">
    <property type="entry name" value="Ribosomal_L11_N"/>
    <property type="match status" value="1"/>
</dbReference>
<dbReference type="SMART" id="SM00649">
    <property type="entry name" value="RL11"/>
    <property type="match status" value="1"/>
</dbReference>
<dbReference type="SUPFAM" id="SSF54747">
    <property type="entry name" value="Ribosomal L11/L12e N-terminal domain"/>
    <property type="match status" value="1"/>
</dbReference>
<dbReference type="SUPFAM" id="SSF46906">
    <property type="entry name" value="Ribosomal protein L11, C-terminal domain"/>
    <property type="match status" value="1"/>
</dbReference>
<dbReference type="PROSITE" id="PS00359">
    <property type="entry name" value="RIBOSOMAL_L11"/>
    <property type="match status" value="1"/>
</dbReference>
<comment type="function">
    <text evidence="1">Forms part of the ribosomal stalk which helps the ribosome interact with GTP-bound translation factors.</text>
</comment>
<comment type="subunit">
    <text evidence="1">Part of the ribosomal stalk of the 50S ribosomal subunit. Interacts with L10 and the large rRNA to form the base of the stalk. L10 forms an elongated spine to which L12 dimers bind in a sequential fashion forming a multimeric L10(L12)X complex.</text>
</comment>
<comment type="PTM">
    <text evidence="1">One or more lysine residues are methylated.</text>
</comment>
<comment type="similarity">
    <text evidence="1">Belongs to the universal ribosomal protein uL11 family.</text>
</comment>
<evidence type="ECO:0000255" key="1">
    <source>
        <dbReference type="HAMAP-Rule" id="MF_00736"/>
    </source>
</evidence>
<evidence type="ECO:0000305" key="2"/>
<proteinExistence type="inferred from homology"/>
<keyword id="KW-0488">Methylation</keyword>
<keyword id="KW-0687">Ribonucleoprotein</keyword>
<keyword id="KW-0689">Ribosomal protein</keyword>
<keyword id="KW-0694">RNA-binding</keyword>
<keyword id="KW-0699">rRNA-binding</keyword>
<name>RL11_BACCN</name>
<organism>
    <name type="scientific">Bacillus cytotoxicus (strain DSM 22905 / CIP 110041 / 391-98 / NVH 391-98)</name>
    <dbReference type="NCBI Taxonomy" id="315749"/>
    <lineage>
        <taxon>Bacteria</taxon>
        <taxon>Bacillati</taxon>
        <taxon>Bacillota</taxon>
        <taxon>Bacilli</taxon>
        <taxon>Bacillales</taxon>
        <taxon>Bacillaceae</taxon>
        <taxon>Bacillus</taxon>
        <taxon>Bacillus cereus group</taxon>
    </lineage>
</organism>
<feature type="chain" id="PRO_1000083367" description="Large ribosomal subunit protein uL11">
    <location>
        <begin position="1"/>
        <end position="141"/>
    </location>
</feature>
<accession>A7GK08</accession>
<gene>
    <name evidence="1" type="primary">rplK</name>
    <name type="ordered locus">Bcer98_0091</name>
</gene>
<sequence length="141" mass="14976">MAKKVIKMVKLQIPAGKANPAPPVGPALGQAGVNIMGFCKEFNARTADQAGLIIPVEITVFEDRSFTFITKTPPAAVLLKKVAGIESGSGEPNRNKVATVKRDKVREIAETKMPDLNAASVEAAMRMVEGTARSMGIVIED</sequence>
<reference key="1">
    <citation type="journal article" date="2008" name="Chem. Biol. Interact.">
        <title>Extending the Bacillus cereus group genomics to putative food-borne pathogens of different toxicity.</title>
        <authorList>
            <person name="Lapidus A."/>
            <person name="Goltsman E."/>
            <person name="Auger S."/>
            <person name="Galleron N."/>
            <person name="Segurens B."/>
            <person name="Dossat C."/>
            <person name="Land M.L."/>
            <person name="Broussolle V."/>
            <person name="Brillard J."/>
            <person name="Guinebretiere M.-H."/>
            <person name="Sanchis V."/>
            <person name="Nguen-the C."/>
            <person name="Lereclus D."/>
            <person name="Richardson P."/>
            <person name="Wincker P."/>
            <person name="Weissenbach J."/>
            <person name="Ehrlich S.D."/>
            <person name="Sorokin A."/>
        </authorList>
    </citation>
    <scope>NUCLEOTIDE SEQUENCE [LARGE SCALE GENOMIC DNA]</scope>
    <source>
        <strain>DSM 22905 / CIP 110041 / 391-98 / NVH 391-98</strain>
    </source>
</reference>